<feature type="chain" id="PRO_0000461922" description="Divalent metal transporter 1" evidence="2">
    <location>
        <begin position="1"/>
        <end position="696"/>
    </location>
</feature>
<feature type="topological domain" description="Cytoplasmic" evidence="7">
    <location>
        <begin position="1"/>
        <end position="236"/>
    </location>
</feature>
<feature type="transmembrane region" description="Helical" evidence="2">
    <location>
        <begin position="237"/>
        <end position="255"/>
    </location>
</feature>
<feature type="topological domain" description="Vacuolar" evidence="7">
    <location>
        <begin position="256"/>
        <end position="288"/>
    </location>
</feature>
<feature type="transmembrane region" description="Helical" evidence="2">
    <location>
        <begin position="289"/>
        <end position="311"/>
    </location>
</feature>
<feature type="topological domain" description="Cytoplasmic" evidence="7">
    <location>
        <begin position="312"/>
        <end position="331"/>
    </location>
</feature>
<feature type="transmembrane region" description="Helical" evidence="2">
    <location>
        <begin position="332"/>
        <end position="357"/>
    </location>
</feature>
<feature type="topological domain" description="Vacuolar" evidence="7">
    <location>
        <begin position="358"/>
        <end position="362"/>
    </location>
</feature>
<feature type="transmembrane region" description="Helical" evidence="2">
    <location>
        <begin position="363"/>
        <end position="382"/>
    </location>
</feature>
<feature type="topological domain" description="Cytoplasmic" evidence="7">
    <location>
        <begin position="383"/>
        <end position="393"/>
    </location>
</feature>
<feature type="transmembrane region" description="Helical" evidence="2">
    <location>
        <begin position="394"/>
        <end position="416"/>
    </location>
</feature>
<feature type="topological domain" description="Vacuolar" evidence="7">
    <location>
        <begin position="417"/>
        <end position="435"/>
    </location>
</feature>
<feature type="transmembrane region" description="Helical" evidence="2">
    <location>
        <begin position="436"/>
        <end position="455"/>
    </location>
</feature>
<feature type="topological domain" description="Cytoplasmic" evidence="7">
    <location>
        <begin position="456"/>
        <end position="475"/>
    </location>
</feature>
<feature type="transmembrane region" description="Helical" evidence="2">
    <location>
        <begin position="476"/>
        <end position="499"/>
    </location>
</feature>
<feature type="topological domain" description="Vacuolar" evidence="7">
    <location>
        <begin position="500"/>
        <end position="529"/>
    </location>
</feature>
<feature type="transmembrane region" description="Helical" evidence="2">
    <location>
        <begin position="530"/>
        <end position="546"/>
    </location>
</feature>
<feature type="topological domain" description="Cytoplasmic" evidence="7">
    <location>
        <begin position="547"/>
        <end position="566"/>
    </location>
</feature>
<feature type="transmembrane region" description="Helical" evidence="2">
    <location>
        <begin position="567"/>
        <end position="585"/>
    </location>
</feature>
<feature type="topological domain" description="Vacuolar" evidence="7">
    <location>
        <begin position="586"/>
        <end position="596"/>
    </location>
</feature>
<feature type="transmembrane region" description="Helical" evidence="2">
    <location>
        <begin position="597"/>
        <end position="615"/>
    </location>
</feature>
<feature type="topological domain" description="Cytoplasmic" evidence="7">
    <location>
        <begin position="616"/>
        <end position="634"/>
    </location>
</feature>
<feature type="transmembrane region" description="Helical" evidence="2">
    <location>
        <begin position="635"/>
        <end position="657"/>
    </location>
</feature>
<feature type="topological domain" description="Vacuolar" evidence="7">
    <location>
        <begin position="658"/>
        <end position="662"/>
    </location>
</feature>
<feature type="transmembrane region" description="Helical" evidence="2">
    <location>
        <begin position="663"/>
        <end position="684"/>
    </location>
</feature>
<feature type="topological domain" description="Cytoplasmic" evidence="7">
    <location>
        <begin position="685"/>
        <end position="696"/>
    </location>
</feature>
<feature type="region of interest" description="Disordered" evidence="4">
    <location>
        <begin position="1"/>
        <end position="31"/>
    </location>
</feature>
<feature type="compositionally biased region" description="Polar residues" evidence="4">
    <location>
        <begin position="11"/>
        <end position="24"/>
    </location>
</feature>
<feature type="glycosylation site" description="N-linked (GlcNAc...) asparagine" evidence="3">
    <location>
        <position position="278"/>
    </location>
</feature>
<feature type="glycosylation site" description="N-linked (GlcNAc...) asparagine" evidence="3">
    <location>
        <position position="502"/>
    </location>
</feature>
<comment type="function">
    <text evidence="5">Iron transporter (PubMed:38049852). Required for parasite development during the blood stages (PubMed:38049852). Required for full pathogenicity (PubMed:38049852).</text>
</comment>
<comment type="catalytic activity">
    <reaction evidence="5">
        <text>Fe(2+)(in) = Fe(2+)(out)</text>
        <dbReference type="Rhea" id="RHEA:28486"/>
        <dbReference type="ChEBI" id="CHEBI:29033"/>
    </reaction>
</comment>
<comment type="subcellular location">
    <subcellularLocation>
        <location evidence="5">Vacuole membrane</location>
        <topology evidence="2">Multi-pass membrane protein</topology>
    </subcellularLocation>
</comment>
<comment type="disruption phenotype">
    <text evidence="5">Repeated attempts to generate a knockout failed (PubMed:38049852). Conditional knockdown results in severe growth defects in parasites during blood stages (PubMed:38049852). Reduced pathogenicity in mice (PubMed:38049852). Reduced sensitivity of parasites to antimalarial drug artemisinin (PubMed:38049852).</text>
</comment>
<comment type="miscellaneous">
    <text evidence="5">Culture supplementation with Fe(2+) rescues the growth defects in parasites with partial gene knockout.</text>
</comment>
<comment type="similarity">
    <text evidence="7">Belongs to the NRAMP (TC 2.A.55) family.</text>
</comment>
<gene>
    <name evidence="1" type="primary">FVRT1</name>
    <name evidence="9" type="ORF">PY17X_1241800</name>
    <name evidence="8" type="ORF">PYYM_1241000</name>
</gene>
<protein>
    <recommendedName>
        <fullName evidence="6">Divalent metal transporter 1</fullName>
        <shortName evidence="6">PyDMT1</shortName>
    </recommendedName>
    <alternativeName>
        <fullName evidence="1">Food vacuole resident transporter 1</fullName>
    </alternativeName>
</protein>
<sequence length="696" mass="79813">MHQDNSMRRAINQSRNGGSDSCDINNDREHDNINRNSYINNFHIENINSDKNEQSYIYCSDRAQVTDSILGNRKYTHEENINSTEMFSRTNYEYSNKNNVDIEMYNISNNNFYNGNNNGHSNDIIDYINNNNVNKDLSNTSNNADINTYIKKLTSNQSTAYCDGKGYNESANGSNFDINFRDVIKNNNNKNYKNNNHVPDDMLELGDRSFDSSFYIHNNVEEIDTERSNRLSFMSKLKMYFNYFGPGWIVAIAYLDPGNICGNLNVGLIRSDDFINVNSSVKDYTGYRLLWVLVYGHILGFIFHTLSMKLGHITGLDLAALCRKEFSSKFSYFLYICVQIAIWGAHLQAIIGVFVAINLILGIPVKIAILYTLIEAFAYSFLENKSLDLLEKVLSLLIGILVCCFMFNVFMTPINFQEVASSILYPRIPKGKLLDTMGLLGSVISAHIFYLHSNLTSKKKPVIYNDRMVKRYNKLGTIESGGSLLVSCITNCIIVLTFAEVNISGDDRKADYNLFNAYDVMKKYFGKTSMYIWSFGLLSSGNNASFMCEYASKSVFEGFLNKNVNPFFRVIFSRIILFIMLYAYVSYDKYTIDQLSNFINVVQILLLPLAIIPLYRFSIHKNVLGKFAIKGAFKYLVFVLVISIIVANFLLTLFDFLQYAPSNLYVIFIFISSIFYLLFIIYFFNMPITKTYYKDS</sequence>
<reference evidence="10 11" key="1">
    <citation type="journal article" date="2014" name="BMC Biol.">
        <title>A comprehensive evaluation of rodent malaria parasite genomes and gene expression.</title>
        <authorList>
            <person name="Otto T.D."/>
            <person name="Bohme U."/>
            <person name="Jackson A.P."/>
            <person name="Hunt M."/>
            <person name="Franke-Fayard B."/>
            <person name="Hoeijmakers W.A."/>
            <person name="Religa A.A."/>
            <person name="Robertson L."/>
            <person name="Sanders M."/>
            <person name="Ogun S.A."/>
            <person name="Cunningham D."/>
            <person name="Erhart A."/>
            <person name="Billker O."/>
            <person name="Khan S.M."/>
            <person name="Stunnenberg H.G."/>
            <person name="Langhorne J."/>
            <person name="Holder A.A."/>
            <person name="Waters A.P."/>
            <person name="Newbold C.I."/>
            <person name="Pain A."/>
            <person name="Berriman M."/>
            <person name="Janse C.J."/>
        </authorList>
    </citation>
    <scope>NUCLEOTIDE SEQUENCE [LARGE SCALE GENOMIC DNA]</scope>
    <source>
        <strain evidence="10">17X</strain>
        <strain evidence="11">YM</strain>
    </source>
</reference>
<reference evidence="7" key="2">
    <citation type="journal article" date="2023" name="BMC Biol.">
        <title>Plasmodium yoelii iron transporter PyDMT1 interacts with host ferritin and is required in full activity for malarial pathogenesis.</title>
        <authorList>
            <person name="Zhong M."/>
            <person name="Zhou B."/>
        </authorList>
    </citation>
    <scope>FUNCTION</scope>
    <scope>TRANSPORTER ACTIVITY</scope>
    <scope>SUBCELLULAR LOCATION</scope>
    <scope>DISRUPTION PHENOTYPE</scope>
</reference>
<name>DMT1_PLAYE</name>
<evidence type="ECO:0000250" key="1">
    <source>
        <dbReference type="UniProtKB" id="Q8I3M7"/>
    </source>
</evidence>
<evidence type="ECO:0000255" key="2"/>
<evidence type="ECO:0000255" key="3">
    <source>
        <dbReference type="PROSITE-ProRule" id="PRU00498"/>
    </source>
</evidence>
<evidence type="ECO:0000256" key="4">
    <source>
        <dbReference type="SAM" id="MobiDB-lite"/>
    </source>
</evidence>
<evidence type="ECO:0000269" key="5">
    <source>
    </source>
</evidence>
<evidence type="ECO:0000303" key="6">
    <source>
    </source>
</evidence>
<evidence type="ECO:0000305" key="7"/>
<evidence type="ECO:0000312" key="8">
    <source>
        <dbReference type="EMBL" id="CDU19580.1"/>
    </source>
</evidence>
<evidence type="ECO:0000312" key="9">
    <source>
        <dbReference type="EMBL" id="VTZ80216.1"/>
    </source>
</evidence>
<evidence type="ECO:0000312" key="10">
    <source>
        <dbReference type="Proteomes" id="UP000072874"/>
    </source>
</evidence>
<evidence type="ECO:0000312" key="11">
    <source>
        <dbReference type="Proteomes" id="UP000072904"/>
    </source>
</evidence>
<organism evidence="11">
    <name type="scientific">Plasmodium yoelii</name>
    <dbReference type="NCBI Taxonomy" id="5861"/>
    <lineage>
        <taxon>Eukaryota</taxon>
        <taxon>Sar</taxon>
        <taxon>Alveolata</taxon>
        <taxon>Apicomplexa</taxon>
        <taxon>Aconoidasida</taxon>
        <taxon>Haemosporida</taxon>
        <taxon>Plasmodiidae</taxon>
        <taxon>Plasmodium</taxon>
        <taxon>Plasmodium (Vinckeia)</taxon>
    </lineage>
</organism>
<accession>A0A077Y877</accession>
<dbReference type="EMBL" id="LK934640">
    <property type="protein sequence ID" value="CDU19580.1"/>
    <property type="molecule type" value="Genomic_DNA"/>
</dbReference>
<dbReference type="EMBL" id="LM993666">
    <property type="protein sequence ID" value="VTZ80216.1"/>
    <property type="molecule type" value="Genomic_DNA"/>
</dbReference>
<dbReference type="EnsemblProtists" id="CDU19580">
    <property type="protein sequence ID" value="CDU19580"/>
    <property type="gene ID" value="PYYM_1241000"/>
</dbReference>
<dbReference type="EnsemblProtists" id="CDZ13884">
    <property type="protein sequence ID" value="CDZ13884"/>
    <property type="gene ID" value="PY17X_1241800"/>
</dbReference>
<dbReference type="KEGG" id="pyo:PY17X_1241800"/>
<dbReference type="VEuPathDB" id="PlasmoDB:PY04720"/>
<dbReference type="VEuPathDB" id="PlasmoDB:PY17X_1241800"/>
<dbReference type="VEuPathDB" id="PlasmoDB:Py17XNL_001205269"/>
<dbReference type="VEuPathDB" id="PlasmoDB:PYYM_1241000"/>
<dbReference type="OrthoDB" id="1093299at2759"/>
<dbReference type="Proteomes" id="UP000072874">
    <property type="component" value="Chromosome 12"/>
</dbReference>
<dbReference type="Proteomes" id="UP000072904">
    <property type="component" value="Chromosome 12"/>
</dbReference>
<dbReference type="GO" id="GO:0005886">
    <property type="term" value="C:plasma membrane"/>
    <property type="evidence" value="ECO:0007669"/>
    <property type="project" value="TreeGrafter"/>
</dbReference>
<dbReference type="GO" id="GO:0005774">
    <property type="term" value="C:vacuolar membrane"/>
    <property type="evidence" value="ECO:0007669"/>
    <property type="project" value="UniProtKB-SubCell"/>
</dbReference>
<dbReference type="GO" id="GO:0015086">
    <property type="term" value="F:cadmium ion transmembrane transporter activity"/>
    <property type="evidence" value="ECO:0007669"/>
    <property type="project" value="TreeGrafter"/>
</dbReference>
<dbReference type="GO" id="GO:0005384">
    <property type="term" value="F:manganese ion transmembrane transporter activity"/>
    <property type="evidence" value="ECO:0007669"/>
    <property type="project" value="TreeGrafter"/>
</dbReference>
<dbReference type="GO" id="GO:0034755">
    <property type="term" value="P:iron ion transmembrane transport"/>
    <property type="evidence" value="ECO:0007669"/>
    <property type="project" value="TreeGrafter"/>
</dbReference>
<dbReference type="InterPro" id="IPR001046">
    <property type="entry name" value="NRAMP_fam"/>
</dbReference>
<dbReference type="NCBIfam" id="NF037982">
    <property type="entry name" value="Nramp_1"/>
    <property type="match status" value="1"/>
</dbReference>
<dbReference type="PANTHER" id="PTHR11706:SF33">
    <property type="entry name" value="NATURAL RESISTANCE-ASSOCIATED MACROPHAGE PROTEIN 2"/>
    <property type="match status" value="1"/>
</dbReference>
<dbReference type="PANTHER" id="PTHR11706">
    <property type="entry name" value="SOLUTE CARRIER PROTEIN FAMILY 11 MEMBER"/>
    <property type="match status" value="1"/>
</dbReference>
<dbReference type="Pfam" id="PF01566">
    <property type="entry name" value="Nramp"/>
    <property type="match status" value="1"/>
</dbReference>
<dbReference type="PRINTS" id="PR00447">
    <property type="entry name" value="NATRESASSCMP"/>
</dbReference>
<keyword id="KW-0325">Glycoprotein</keyword>
<keyword id="KW-0406">Ion transport</keyword>
<keyword id="KW-0408">Iron</keyword>
<keyword id="KW-0410">Iron transport</keyword>
<keyword id="KW-0472">Membrane</keyword>
<keyword id="KW-0812">Transmembrane</keyword>
<keyword id="KW-1133">Transmembrane helix</keyword>
<keyword id="KW-0813">Transport</keyword>
<keyword id="KW-0926">Vacuole</keyword>
<proteinExistence type="inferred from homology"/>